<dbReference type="EMBL" id="FN595757">
    <property type="protein sequence ID" value="CBI28289.3"/>
    <property type="molecule type" value="Genomic_DNA"/>
</dbReference>
<dbReference type="RefSeq" id="XP_002273638.1">
    <property type="nucleotide sequence ID" value="XM_002273602.4"/>
</dbReference>
<dbReference type="FunCoup" id="A7QF77">
    <property type="interactions" value="130"/>
</dbReference>
<dbReference type="PaxDb" id="29760-VIT_06s0080g00840.t01"/>
<dbReference type="EnsemblPlants" id="Vitvi06g01522_t001">
    <property type="protein sequence ID" value="Vitvi06g01522_P001"/>
    <property type="gene ID" value="Vitvi06g01522"/>
</dbReference>
<dbReference type="Gramene" id="Vitvi06g01522_t001">
    <property type="protein sequence ID" value="Vitvi06g01522_P001"/>
    <property type="gene ID" value="Vitvi06g01522"/>
</dbReference>
<dbReference type="eggNOG" id="ENOG502QZV7">
    <property type="taxonomic scope" value="Eukaryota"/>
</dbReference>
<dbReference type="HOGENOM" id="CLU_066104_3_1_1"/>
<dbReference type="InParanoid" id="A7QF77"/>
<dbReference type="OMA" id="QWVAICQ"/>
<dbReference type="OrthoDB" id="753675at2759"/>
<dbReference type="Proteomes" id="UP000009183">
    <property type="component" value="Chromosome 6"/>
</dbReference>
<dbReference type="GO" id="GO:0048226">
    <property type="term" value="C:Casparian strip"/>
    <property type="evidence" value="ECO:0000318"/>
    <property type="project" value="GO_Central"/>
</dbReference>
<dbReference type="GO" id="GO:0005886">
    <property type="term" value="C:plasma membrane"/>
    <property type="evidence" value="ECO:0000318"/>
    <property type="project" value="GO_Central"/>
</dbReference>
<dbReference type="GO" id="GO:0042545">
    <property type="term" value="P:cell wall modification"/>
    <property type="evidence" value="ECO:0000318"/>
    <property type="project" value="GO_Central"/>
</dbReference>
<dbReference type="GO" id="GO:0007043">
    <property type="term" value="P:cell-cell junction assembly"/>
    <property type="evidence" value="ECO:0000318"/>
    <property type="project" value="GO_Central"/>
</dbReference>
<dbReference type="InterPro" id="IPR006459">
    <property type="entry name" value="CASP/CASPL"/>
</dbReference>
<dbReference type="InterPro" id="IPR006702">
    <property type="entry name" value="CASP_dom"/>
</dbReference>
<dbReference type="InterPro" id="IPR044173">
    <property type="entry name" value="CASPL"/>
</dbReference>
<dbReference type="NCBIfam" id="TIGR01569">
    <property type="entry name" value="A_tha_TIGR01569"/>
    <property type="match status" value="1"/>
</dbReference>
<dbReference type="PANTHER" id="PTHR36488:SF11">
    <property type="entry name" value="CASP-LIKE PROTEIN"/>
    <property type="match status" value="1"/>
</dbReference>
<dbReference type="PANTHER" id="PTHR36488">
    <property type="entry name" value="CASP-LIKE PROTEIN 1U1"/>
    <property type="match status" value="1"/>
</dbReference>
<dbReference type="Pfam" id="PF04535">
    <property type="entry name" value="CASP_dom"/>
    <property type="match status" value="1"/>
</dbReference>
<proteinExistence type="evidence at transcript level"/>
<evidence type="ECO:0000250" key="1"/>
<evidence type="ECO:0000255" key="2"/>
<evidence type="ECO:0000305" key="3"/>
<keyword id="KW-1003">Cell membrane</keyword>
<keyword id="KW-0961">Cell wall biogenesis/degradation</keyword>
<keyword id="KW-0472">Membrane</keyword>
<keyword id="KW-1185">Reference proteome</keyword>
<keyword id="KW-0812">Transmembrane</keyword>
<keyword id="KW-1133">Transmembrane helix</keyword>
<name>CASP2_VITVI</name>
<protein>
    <recommendedName>
        <fullName>Casparian strip membrane protein 2</fullName>
        <shortName>VvCASP2</shortName>
    </recommendedName>
</protein>
<reference key="1">
    <citation type="journal article" date="2007" name="Nature">
        <title>The grapevine genome sequence suggests ancestral hexaploidization in major angiosperm phyla.</title>
        <authorList>
            <person name="Jaillon O."/>
            <person name="Aury J.-M."/>
            <person name="Noel B."/>
            <person name="Policriti A."/>
            <person name="Clepet C."/>
            <person name="Casagrande A."/>
            <person name="Choisne N."/>
            <person name="Aubourg S."/>
            <person name="Vitulo N."/>
            <person name="Jubin C."/>
            <person name="Vezzi A."/>
            <person name="Legeai F."/>
            <person name="Hugueney P."/>
            <person name="Dasilva C."/>
            <person name="Horner D."/>
            <person name="Mica E."/>
            <person name="Jublot D."/>
            <person name="Poulain J."/>
            <person name="Bruyere C."/>
            <person name="Billault A."/>
            <person name="Segurens B."/>
            <person name="Gouyvenoux M."/>
            <person name="Ugarte E."/>
            <person name="Cattonaro F."/>
            <person name="Anthouard V."/>
            <person name="Vico V."/>
            <person name="Del Fabbro C."/>
            <person name="Alaux M."/>
            <person name="Di Gaspero G."/>
            <person name="Dumas V."/>
            <person name="Felice N."/>
            <person name="Paillard S."/>
            <person name="Juman I."/>
            <person name="Moroldo M."/>
            <person name="Scalabrin S."/>
            <person name="Canaguier A."/>
            <person name="Le Clainche I."/>
            <person name="Malacrida G."/>
            <person name="Durand E."/>
            <person name="Pesole G."/>
            <person name="Laucou V."/>
            <person name="Chatelet P."/>
            <person name="Merdinoglu D."/>
            <person name="Delledonne M."/>
            <person name="Pezzotti M."/>
            <person name="Lecharny A."/>
            <person name="Scarpelli C."/>
            <person name="Artiguenave F."/>
            <person name="Pe M.E."/>
            <person name="Valle G."/>
            <person name="Morgante M."/>
            <person name="Caboche M."/>
            <person name="Adam-Blondon A.-F."/>
            <person name="Weissenbach J."/>
            <person name="Quetier F."/>
            <person name="Wincker P."/>
        </authorList>
    </citation>
    <scope>NUCLEOTIDE SEQUENCE [LARGE SCALE GENOMIC DNA]</scope>
    <source>
        <strain>cv. Pinot noir / PN40024</strain>
    </source>
</reference>
<reference key="2">
    <citation type="journal article" date="2014" name="Plant Physiol.">
        <title>Functional and evolutionary analysis of the CASPARIAN STRIP MEMBRANE DOMAIN PROTEIN family.</title>
        <authorList>
            <person name="Roppolo D."/>
            <person name="Boeckmann B."/>
            <person name="Pfister A."/>
            <person name="Boutet E."/>
            <person name="Rubio M.C."/>
            <person name="Denervaud-Tendon V."/>
            <person name="Vermeer J.E."/>
            <person name="Gheyselinck J."/>
            <person name="Xenarios I."/>
            <person name="Geldner N."/>
        </authorList>
    </citation>
    <scope>GENE FAMILY</scope>
    <scope>NOMENCLATURE</scope>
</reference>
<comment type="function">
    <text evidence="1">Regulates membrane-cell wall junctions and localized cell wall deposition. Required for establishment of the Casparian strip membrane domain (CSD) and the subsequent formation of Casparian strips, a cell wall modification of the root endodermis that determines an apoplastic barrier between the intraorganismal apoplasm and the extraorganismal apoplasm and prevents lateral diffusion (By similarity).</text>
</comment>
<comment type="subunit">
    <text evidence="1">Homodimer and heterodimers.</text>
</comment>
<comment type="subcellular location">
    <subcellularLocation>
        <location evidence="1">Cell membrane</location>
        <topology evidence="1">Multi-pass membrane protein</topology>
    </subcellularLocation>
    <text evidence="1">Very restricted localization following a belt shape within the plasma membrane which coincides with the position of the Casparian strip membrane domain in the root endodermis.</text>
</comment>
<comment type="similarity">
    <text evidence="3">Belongs to the Casparian strip membrane proteins (CASP) family.</text>
</comment>
<feature type="chain" id="PRO_0000370302" description="Casparian strip membrane protein 2">
    <location>
        <begin position="1"/>
        <end position="201"/>
    </location>
</feature>
<feature type="topological domain" description="Cytoplasmic" evidence="2">
    <location>
        <begin position="1"/>
        <end position="38"/>
    </location>
</feature>
<feature type="transmembrane region" description="Helical" evidence="2">
    <location>
        <begin position="39"/>
        <end position="59"/>
    </location>
</feature>
<feature type="topological domain" description="Extracellular" evidence="2">
    <location>
        <begin position="60"/>
        <end position="89"/>
    </location>
</feature>
<feature type="transmembrane region" description="Helical" evidence="2">
    <location>
        <begin position="90"/>
        <end position="110"/>
    </location>
</feature>
<feature type="topological domain" description="Cytoplasmic" evidence="2">
    <location>
        <begin position="111"/>
        <end position="129"/>
    </location>
</feature>
<feature type="transmembrane region" description="Helical" evidence="2">
    <location>
        <begin position="130"/>
        <end position="150"/>
    </location>
</feature>
<feature type="topological domain" description="Extracellular" evidence="2">
    <location>
        <begin position="151"/>
        <end position="175"/>
    </location>
</feature>
<feature type="transmembrane region" description="Helical" evidence="2">
    <location>
        <begin position="176"/>
        <end position="196"/>
    </location>
</feature>
<feature type="topological domain" description="Cytoplasmic" evidence="2">
    <location>
        <begin position="197"/>
        <end position="201"/>
    </location>
</feature>
<organism>
    <name type="scientific">Vitis vinifera</name>
    <name type="common">Grape</name>
    <dbReference type="NCBI Taxonomy" id="29760"/>
    <lineage>
        <taxon>Eukaryota</taxon>
        <taxon>Viridiplantae</taxon>
        <taxon>Streptophyta</taxon>
        <taxon>Embryophyta</taxon>
        <taxon>Tracheophyta</taxon>
        <taxon>Spermatophyta</taxon>
        <taxon>Magnoliopsida</taxon>
        <taxon>eudicotyledons</taxon>
        <taxon>Gunneridae</taxon>
        <taxon>Pentapetalae</taxon>
        <taxon>rosids</taxon>
        <taxon>Vitales</taxon>
        <taxon>Vitaceae</taxon>
        <taxon>Viteae</taxon>
        <taxon>Vitis</taxon>
    </lineage>
</organism>
<gene>
    <name type="ordered locus">VIT_06s0080g00840</name>
    <name type="ORF">GSVIVT00037312001</name>
    <name type="ORF">GSVIVT01036085001</name>
    <name type="ORF">VIT_00036085001</name>
    <name type="ORF">Vv06s0080g00840</name>
</gene>
<accession>A7QF77</accession>
<accession>D7TCR6</accession>
<sequence>MKSTGEATAINIGETKSASATTVATTKAIQHPKAGLKRGLAIFDFILRLSAIGAALAATTTMGTTDQTLPFFTQFFQFQASYDDLPAFSFFVIANAIASGYLFLSLPFSIVCIVRPHAMGARLLLVICDTVMVALTIAAAAAAAAIVYLAHNGNSNANWVAICQQFDDFCQSVSGAVVASFIAAVLFMLMIVLSAFSLRKH</sequence>